<gene>
    <name evidence="1" type="primary">guaA</name>
    <name type="ordered locus">YPN_1268</name>
    <name type="ORF">YP516_1394</name>
</gene>
<organism>
    <name type="scientific">Yersinia pestis bv. Antiqua (strain Nepal516)</name>
    <dbReference type="NCBI Taxonomy" id="377628"/>
    <lineage>
        <taxon>Bacteria</taxon>
        <taxon>Pseudomonadati</taxon>
        <taxon>Pseudomonadota</taxon>
        <taxon>Gammaproteobacteria</taxon>
        <taxon>Enterobacterales</taxon>
        <taxon>Yersiniaceae</taxon>
        <taxon>Yersinia</taxon>
    </lineage>
</organism>
<comment type="function">
    <text evidence="1">Catalyzes the synthesis of GMP from XMP.</text>
</comment>
<comment type="catalytic activity">
    <reaction evidence="1">
        <text>XMP + L-glutamine + ATP + H2O = GMP + L-glutamate + AMP + diphosphate + 2 H(+)</text>
        <dbReference type="Rhea" id="RHEA:11680"/>
        <dbReference type="ChEBI" id="CHEBI:15377"/>
        <dbReference type="ChEBI" id="CHEBI:15378"/>
        <dbReference type="ChEBI" id="CHEBI:29985"/>
        <dbReference type="ChEBI" id="CHEBI:30616"/>
        <dbReference type="ChEBI" id="CHEBI:33019"/>
        <dbReference type="ChEBI" id="CHEBI:57464"/>
        <dbReference type="ChEBI" id="CHEBI:58115"/>
        <dbReference type="ChEBI" id="CHEBI:58359"/>
        <dbReference type="ChEBI" id="CHEBI:456215"/>
        <dbReference type="EC" id="6.3.5.2"/>
    </reaction>
</comment>
<comment type="pathway">
    <text evidence="1">Purine metabolism; GMP biosynthesis; GMP from XMP (L-Gln route): step 1/1.</text>
</comment>
<comment type="subunit">
    <text evidence="1">Homodimer.</text>
</comment>
<sequence length="525" mass="58422">MTKNIHKHRILILDFGSQYTQLLARRVREIGVYCELWAWDVTEAQIREFNPSGIILSGSPESTIENGSPRAPDYVFTAGVPVLGVCYGMQTMAIQLGGKVESSNQREFGYAQVEIKADSALIRDIKDAINPAGEAVLDVWMSHGDKVAEIPADFVTVASTDTCPFAIMANEEKRFYGVQFHPEVTHTKQGLRLLERFVLGICGCEALWTSATIIEDAIVRLREQIGDDHVILGLSGGVDSSVTAMLLHRAIGKRLTCVFVDNGLLRLNEADQVLEMFGDKFGLNIVHVAAEDRFLSALTGVDEPEAKRKIIGRVFVELFDEEACKQEQVKWLAQGTIYPDVIESAASATGKAHVIKSHHNVGGLPKEMKLGLVEPLKELFKDEVRKIGLELGLPYDMLYRHPFPGPGLGVRVLGEVKKEYCDLLRRADAIFIEELHKADLYNKVSQAFTVFLPVRSVGVMGDGRKYDWVVSLRAVETVDFMTAHWAHLPYDFLGRVSNRIINEVNGISRVVYDISGKPPATIEWE</sequence>
<dbReference type="EC" id="6.3.5.2" evidence="1"/>
<dbReference type="EMBL" id="CP000305">
    <property type="protein sequence ID" value="ABG17598.1"/>
    <property type="molecule type" value="Genomic_DNA"/>
</dbReference>
<dbReference type="EMBL" id="ACNQ01000008">
    <property type="protein sequence ID" value="EEO77714.1"/>
    <property type="molecule type" value="Genomic_DNA"/>
</dbReference>
<dbReference type="RefSeq" id="WP_002209807.1">
    <property type="nucleotide sequence ID" value="NZ_ACNQ01000008.1"/>
</dbReference>
<dbReference type="SMR" id="Q1CK82"/>
<dbReference type="GeneID" id="57975827"/>
<dbReference type="KEGG" id="ypn:YPN_1268"/>
<dbReference type="HOGENOM" id="CLU_014340_0_5_6"/>
<dbReference type="UniPathway" id="UPA00189">
    <property type="reaction ID" value="UER00296"/>
</dbReference>
<dbReference type="Proteomes" id="UP000008936">
    <property type="component" value="Chromosome"/>
</dbReference>
<dbReference type="GO" id="GO:0005829">
    <property type="term" value="C:cytosol"/>
    <property type="evidence" value="ECO:0007669"/>
    <property type="project" value="TreeGrafter"/>
</dbReference>
<dbReference type="GO" id="GO:0005524">
    <property type="term" value="F:ATP binding"/>
    <property type="evidence" value="ECO:0007669"/>
    <property type="project" value="UniProtKB-UniRule"/>
</dbReference>
<dbReference type="GO" id="GO:0003921">
    <property type="term" value="F:GMP synthase activity"/>
    <property type="evidence" value="ECO:0007669"/>
    <property type="project" value="InterPro"/>
</dbReference>
<dbReference type="CDD" id="cd01742">
    <property type="entry name" value="GATase1_GMP_Synthase"/>
    <property type="match status" value="1"/>
</dbReference>
<dbReference type="CDD" id="cd01997">
    <property type="entry name" value="GMP_synthase_C"/>
    <property type="match status" value="1"/>
</dbReference>
<dbReference type="FunFam" id="3.30.300.10:FF:000002">
    <property type="entry name" value="GMP synthase [glutamine-hydrolyzing]"/>
    <property type="match status" value="1"/>
</dbReference>
<dbReference type="FunFam" id="3.40.50.620:FF:000001">
    <property type="entry name" value="GMP synthase [glutamine-hydrolyzing]"/>
    <property type="match status" value="1"/>
</dbReference>
<dbReference type="FunFam" id="3.40.50.880:FF:000001">
    <property type="entry name" value="GMP synthase [glutamine-hydrolyzing]"/>
    <property type="match status" value="1"/>
</dbReference>
<dbReference type="Gene3D" id="3.30.300.10">
    <property type="match status" value="1"/>
</dbReference>
<dbReference type="Gene3D" id="3.40.50.880">
    <property type="match status" value="1"/>
</dbReference>
<dbReference type="Gene3D" id="3.40.50.620">
    <property type="entry name" value="HUPs"/>
    <property type="match status" value="1"/>
</dbReference>
<dbReference type="HAMAP" id="MF_00344">
    <property type="entry name" value="GMP_synthase"/>
    <property type="match status" value="1"/>
</dbReference>
<dbReference type="InterPro" id="IPR029062">
    <property type="entry name" value="Class_I_gatase-like"/>
</dbReference>
<dbReference type="InterPro" id="IPR017926">
    <property type="entry name" value="GATASE"/>
</dbReference>
<dbReference type="InterPro" id="IPR001674">
    <property type="entry name" value="GMP_synth_C"/>
</dbReference>
<dbReference type="InterPro" id="IPR004739">
    <property type="entry name" value="GMP_synth_GATase"/>
</dbReference>
<dbReference type="InterPro" id="IPR022955">
    <property type="entry name" value="GMP_synthase"/>
</dbReference>
<dbReference type="InterPro" id="IPR025777">
    <property type="entry name" value="GMPS_ATP_PPase_dom"/>
</dbReference>
<dbReference type="InterPro" id="IPR022310">
    <property type="entry name" value="NAD/GMP_synthase"/>
</dbReference>
<dbReference type="InterPro" id="IPR014729">
    <property type="entry name" value="Rossmann-like_a/b/a_fold"/>
</dbReference>
<dbReference type="NCBIfam" id="TIGR00884">
    <property type="entry name" value="guaA_Cterm"/>
    <property type="match status" value="1"/>
</dbReference>
<dbReference type="NCBIfam" id="TIGR00888">
    <property type="entry name" value="guaA_Nterm"/>
    <property type="match status" value="1"/>
</dbReference>
<dbReference type="NCBIfam" id="NF000848">
    <property type="entry name" value="PRK00074.1"/>
    <property type="match status" value="1"/>
</dbReference>
<dbReference type="PANTHER" id="PTHR11922:SF2">
    <property type="entry name" value="GMP SYNTHASE [GLUTAMINE-HYDROLYZING]"/>
    <property type="match status" value="1"/>
</dbReference>
<dbReference type="PANTHER" id="PTHR11922">
    <property type="entry name" value="GMP SYNTHASE-RELATED"/>
    <property type="match status" value="1"/>
</dbReference>
<dbReference type="Pfam" id="PF00117">
    <property type="entry name" value="GATase"/>
    <property type="match status" value="1"/>
</dbReference>
<dbReference type="Pfam" id="PF00958">
    <property type="entry name" value="GMP_synt_C"/>
    <property type="match status" value="1"/>
</dbReference>
<dbReference type="Pfam" id="PF02540">
    <property type="entry name" value="NAD_synthase"/>
    <property type="match status" value="1"/>
</dbReference>
<dbReference type="PRINTS" id="PR00097">
    <property type="entry name" value="ANTSNTHASEII"/>
</dbReference>
<dbReference type="PRINTS" id="PR00096">
    <property type="entry name" value="GATASE"/>
</dbReference>
<dbReference type="SUPFAM" id="SSF52402">
    <property type="entry name" value="Adenine nucleotide alpha hydrolases-like"/>
    <property type="match status" value="1"/>
</dbReference>
<dbReference type="SUPFAM" id="SSF52317">
    <property type="entry name" value="Class I glutamine amidotransferase-like"/>
    <property type="match status" value="1"/>
</dbReference>
<dbReference type="SUPFAM" id="SSF54810">
    <property type="entry name" value="GMP synthetase C-terminal dimerisation domain"/>
    <property type="match status" value="1"/>
</dbReference>
<dbReference type="PROSITE" id="PS51273">
    <property type="entry name" value="GATASE_TYPE_1"/>
    <property type="match status" value="1"/>
</dbReference>
<dbReference type="PROSITE" id="PS51553">
    <property type="entry name" value="GMPS_ATP_PPASE"/>
    <property type="match status" value="1"/>
</dbReference>
<keyword id="KW-0067">ATP-binding</keyword>
<keyword id="KW-0315">Glutamine amidotransferase</keyword>
<keyword id="KW-0332">GMP biosynthesis</keyword>
<keyword id="KW-0436">Ligase</keyword>
<keyword id="KW-0547">Nucleotide-binding</keyword>
<keyword id="KW-0658">Purine biosynthesis</keyword>
<accession>Q1CK82</accession>
<accession>C4GRM3</accession>
<reference key="1">
    <citation type="journal article" date="2006" name="J. Bacteriol.">
        <title>Complete genome sequence of Yersinia pestis strains Antiqua and Nepal516: evidence of gene reduction in an emerging pathogen.</title>
        <authorList>
            <person name="Chain P.S.G."/>
            <person name="Hu P."/>
            <person name="Malfatti S.A."/>
            <person name="Radnedge L."/>
            <person name="Larimer F."/>
            <person name="Vergez L.M."/>
            <person name="Worsham P."/>
            <person name="Chu M.C."/>
            <person name="Andersen G.L."/>
        </authorList>
    </citation>
    <scope>NUCLEOTIDE SEQUENCE [LARGE SCALE GENOMIC DNA]</scope>
    <source>
        <strain>Nepal516</strain>
    </source>
</reference>
<reference key="2">
    <citation type="submission" date="2009-04" db="EMBL/GenBank/DDBJ databases">
        <title>Yersinia pestis Nepal516A whole genome shotgun sequencing project.</title>
        <authorList>
            <person name="Plunkett G. III"/>
            <person name="Anderson B.D."/>
            <person name="Baumler D.J."/>
            <person name="Burland V."/>
            <person name="Cabot E.L."/>
            <person name="Glasner J.D."/>
            <person name="Mau B."/>
            <person name="Neeno-Eckwall E."/>
            <person name="Perna N.T."/>
            <person name="Munk A.C."/>
            <person name="Tapia R."/>
            <person name="Green L.D."/>
            <person name="Rogers Y.C."/>
            <person name="Detter J.C."/>
            <person name="Bruce D.C."/>
            <person name="Brettin T.S."/>
        </authorList>
    </citation>
    <scope>NUCLEOTIDE SEQUENCE [LARGE SCALE GENOMIC DNA]</scope>
    <source>
        <strain>Nepal516</strain>
    </source>
</reference>
<feature type="chain" id="PRO_1000120461" description="GMP synthase [glutamine-hydrolyzing]">
    <location>
        <begin position="1"/>
        <end position="525"/>
    </location>
</feature>
<feature type="domain" description="Glutamine amidotransferase type-1" evidence="1">
    <location>
        <begin position="9"/>
        <end position="207"/>
    </location>
</feature>
<feature type="domain" description="GMPS ATP-PPase" evidence="1">
    <location>
        <begin position="208"/>
        <end position="400"/>
    </location>
</feature>
<feature type="active site" description="Nucleophile" evidence="1">
    <location>
        <position position="86"/>
    </location>
</feature>
<feature type="active site" evidence="1">
    <location>
        <position position="181"/>
    </location>
</feature>
<feature type="active site" evidence="1">
    <location>
        <position position="183"/>
    </location>
</feature>
<feature type="binding site" evidence="1">
    <location>
        <begin position="235"/>
        <end position="241"/>
    </location>
    <ligand>
        <name>ATP</name>
        <dbReference type="ChEBI" id="CHEBI:30616"/>
    </ligand>
</feature>
<name>GUAA_YERPN</name>
<protein>
    <recommendedName>
        <fullName evidence="1">GMP synthase [glutamine-hydrolyzing]</fullName>
        <ecNumber evidence="1">6.3.5.2</ecNumber>
    </recommendedName>
    <alternativeName>
        <fullName evidence="1">GMP synthetase</fullName>
    </alternativeName>
    <alternativeName>
        <fullName evidence="1">Glutamine amidotransferase</fullName>
    </alternativeName>
</protein>
<proteinExistence type="inferred from homology"/>
<evidence type="ECO:0000255" key="1">
    <source>
        <dbReference type="HAMAP-Rule" id="MF_00344"/>
    </source>
</evidence>